<accession>B0VT23</accession>
<organism>
    <name type="scientific">Acinetobacter baumannii (strain SDF)</name>
    <dbReference type="NCBI Taxonomy" id="509170"/>
    <lineage>
        <taxon>Bacteria</taxon>
        <taxon>Pseudomonadati</taxon>
        <taxon>Pseudomonadota</taxon>
        <taxon>Gammaproteobacteria</taxon>
        <taxon>Moraxellales</taxon>
        <taxon>Moraxellaceae</taxon>
        <taxon>Acinetobacter</taxon>
        <taxon>Acinetobacter calcoaceticus/baumannii complex</taxon>
    </lineage>
</organism>
<protein>
    <recommendedName>
        <fullName evidence="1">Erythronate-4-phosphate dehydrogenase</fullName>
        <ecNumber evidence="1">1.1.1.290</ecNumber>
    </recommendedName>
</protein>
<gene>
    <name evidence="1" type="primary">pdxB</name>
    <name type="ordered locus">ABSDF0843</name>
</gene>
<keyword id="KW-0963">Cytoplasm</keyword>
<keyword id="KW-0520">NAD</keyword>
<keyword id="KW-0560">Oxidoreductase</keyword>
<keyword id="KW-0664">Pyridoxine biosynthesis</keyword>
<evidence type="ECO:0000255" key="1">
    <source>
        <dbReference type="HAMAP-Rule" id="MF_01825"/>
    </source>
</evidence>
<feature type="chain" id="PRO_1000188254" description="Erythronate-4-phosphate dehydrogenase">
    <location>
        <begin position="1"/>
        <end position="355"/>
    </location>
</feature>
<feature type="active site" evidence="1">
    <location>
        <position position="206"/>
    </location>
</feature>
<feature type="active site" evidence="1">
    <location>
        <position position="234"/>
    </location>
</feature>
<feature type="active site" description="Proton donor" evidence="1">
    <location>
        <position position="251"/>
    </location>
</feature>
<feature type="binding site" evidence="1">
    <location>
        <position position="45"/>
    </location>
    <ligand>
        <name>substrate</name>
    </ligand>
</feature>
<feature type="binding site" evidence="1">
    <location>
        <position position="66"/>
    </location>
    <ligand>
        <name>substrate</name>
    </ligand>
</feature>
<feature type="binding site" evidence="1">
    <location>
        <position position="146"/>
    </location>
    <ligand>
        <name>NAD(+)</name>
        <dbReference type="ChEBI" id="CHEBI:57540"/>
    </ligand>
</feature>
<feature type="binding site" evidence="1">
    <location>
        <position position="229"/>
    </location>
    <ligand>
        <name>NAD(+)</name>
        <dbReference type="ChEBI" id="CHEBI:57540"/>
    </ligand>
</feature>
<feature type="binding site" evidence="1">
    <location>
        <position position="254"/>
    </location>
    <ligand>
        <name>NAD(+)</name>
        <dbReference type="ChEBI" id="CHEBI:57540"/>
    </ligand>
</feature>
<feature type="binding site" evidence="1">
    <location>
        <position position="255"/>
    </location>
    <ligand>
        <name>substrate</name>
    </ligand>
</feature>
<reference key="1">
    <citation type="journal article" date="2008" name="PLoS ONE">
        <title>Comparative analysis of Acinetobacters: three genomes for three lifestyles.</title>
        <authorList>
            <person name="Vallenet D."/>
            <person name="Nordmann P."/>
            <person name="Barbe V."/>
            <person name="Poirel L."/>
            <person name="Mangenot S."/>
            <person name="Bataille E."/>
            <person name="Dossat C."/>
            <person name="Gas S."/>
            <person name="Kreimeyer A."/>
            <person name="Lenoble P."/>
            <person name="Oztas S."/>
            <person name="Poulain J."/>
            <person name="Segurens B."/>
            <person name="Robert C."/>
            <person name="Abergel C."/>
            <person name="Claverie J.-M."/>
            <person name="Raoult D."/>
            <person name="Medigue C."/>
            <person name="Weissenbach J."/>
            <person name="Cruveiller S."/>
        </authorList>
    </citation>
    <scope>NUCLEOTIDE SEQUENCE [LARGE SCALE GENOMIC DNA]</scope>
    <source>
        <strain>SDF</strain>
    </source>
</reference>
<name>PDXB_ACIBS</name>
<comment type="function">
    <text evidence="1">Catalyzes the oxidation of erythronate-4-phosphate to 3-hydroxy-2-oxo-4-phosphonooxybutanoate.</text>
</comment>
<comment type="catalytic activity">
    <reaction evidence="1">
        <text>4-phospho-D-erythronate + NAD(+) = (R)-3-hydroxy-2-oxo-4-phosphooxybutanoate + NADH + H(+)</text>
        <dbReference type="Rhea" id="RHEA:18829"/>
        <dbReference type="ChEBI" id="CHEBI:15378"/>
        <dbReference type="ChEBI" id="CHEBI:57540"/>
        <dbReference type="ChEBI" id="CHEBI:57945"/>
        <dbReference type="ChEBI" id="CHEBI:58538"/>
        <dbReference type="ChEBI" id="CHEBI:58766"/>
        <dbReference type="EC" id="1.1.1.290"/>
    </reaction>
</comment>
<comment type="pathway">
    <text evidence="1">Cofactor biosynthesis; pyridoxine 5'-phosphate biosynthesis; pyridoxine 5'-phosphate from D-erythrose 4-phosphate: step 2/5.</text>
</comment>
<comment type="subunit">
    <text evidence="1">Homodimer.</text>
</comment>
<comment type="subcellular location">
    <subcellularLocation>
        <location evidence="1">Cytoplasm</location>
    </subcellularLocation>
</comment>
<comment type="similarity">
    <text evidence="1">Belongs to the D-isomer specific 2-hydroxyacid dehydrogenase family. PdxB subfamily.</text>
</comment>
<sequence length="355" mass="39312">MKIVADENLAFTDYFFSEFGDIQHKAGRTLTHTDVQDAEALLVRSVTAVNESLIQNTALKYVGSATIGTDHLDIQALEKQGITWANAAGCNAQAVAEYVITALLHLDASLLEQQEKFTLGIVGLGNVGKRLAYMAQLLGWKVIGFDPFVQLDSIENVSFQTLLQQANAVSIHVPLTKKGEHATYHLFDEKAFAALQPNTILINSARGPVVKEAALIEDIQCTQRKVVLDVFEHEPVISEGLLNMLALATPHIAGYSLEGKARGTQMIYEAFCQKFGYDINKRFETQLPACEDYFSGHDLKAVLKQKLSQIYDIAQYDANIRACVKEGKVEQKAFDLLRKNYPLRREWAAHGGPQA</sequence>
<proteinExistence type="inferred from homology"/>
<dbReference type="EC" id="1.1.1.290" evidence="1"/>
<dbReference type="EMBL" id="CU468230">
    <property type="protein sequence ID" value="CAP00210.1"/>
    <property type="molecule type" value="Genomic_DNA"/>
</dbReference>
<dbReference type="SMR" id="B0VT23"/>
<dbReference type="KEGG" id="abm:ABSDF0843"/>
<dbReference type="HOGENOM" id="CLU_019796_4_0_6"/>
<dbReference type="UniPathway" id="UPA00244">
    <property type="reaction ID" value="UER00310"/>
</dbReference>
<dbReference type="Proteomes" id="UP000001741">
    <property type="component" value="Chromosome"/>
</dbReference>
<dbReference type="GO" id="GO:0005737">
    <property type="term" value="C:cytoplasm"/>
    <property type="evidence" value="ECO:0007669"/>
    <property type="project" value="UniProtKB-SubCell"/>
</dbReference>
<dbReference type="GO" id="GO:0033711">
    <property type="term" value="F:4-phosphoerythronate dehydrogenase activity"/>
    <property type="evidence" value="ECO:0007669"/>
    <property type="project" value="UniProtKB-EC"/>
</dbReference>
<dbReference type="GO" id="GO:0051287">
    <property type="term" value="F:NAD binding"/>
    <property type="evidence" value="ECO:0007669"/>
    <property type="project" value="InterPro"/>
</dbReference>
<dbReference type="GO" id="GO:0046983">
    <property type="term" value="F:protein dimerization activity"/>
    <property type="evidence" value="ECO:0007669"/>
    <property type="project" value="InterPro"/>
</dbReference>
<dbReference type="GO" id="GO:0008615">
    <property type="term" value="P:pyridoxine biosynthetic process"/>
    <property type="evidence" value="ECO:0007669"/>
    <property type="project" value="UniProtKB-UniRule"/>
</dbReference>
<dbReference type="CDD" id="cd12158">
    <property type="entry name" value="ErythrP_dh"/>
    <property type="match status" value="1"/>
</dbReference>
<dbReference type="Gene3D" id="3.30.1370.170">
    <property type="match status" value="1"/>
</dbReference>
<dbReference type="Gene3D" id="3.40.50.720">
    <property type="entry name" value="NAD(P)-binding Rossmann-like Domain"/>
    <property type="match status" value="2"/>
</dbReference>
<dbReference type="HAMAP" id="MF_01825">
    <property type="entry name" value="PdxB"/>
    <property type="match status" value="1"/>
</dbReference>
<dbReference type="InterPro" id="IPR050418">
    <property type="entry name" value="D-iso_2-hydroxyacid_DH_PdxB"/>
</dbReference>
<dbReference type="InterPro" id="IPR006139">
    <property type="entry name" value="D-isomer_2_OHA_DH_cat_dom"/>
</dbReference>
<dbReference type="InterPro" id="IPR029752">
    <property type="entry name" value="D-isomer_DH_CS1"/>
</dbReference>
<dbReference type="InterPro" id="IPR006140">
    <property type="entry name" value="D-isomer_DH_NAD-bd"/>
</dbReference>
<dbReference type="InterPro" id="IPR020921">
    <property type="entry name" value="Erythronate-4-P_DHase"/>
</dbReference>
<dbReference type="InterPro" id="IPR024531">
    <property type="entry name" value="Erythronate-4-P_DHase_dimer"/>
</dbReference>
<dbReference type="InterPro" id="IPR036291">
    <property type="entry name" value="NAD(P)-bd_dom_sf"/>
</dbReference>
<dbReference type="InterPro" id="IPR038251">
    <property type="entry name" value="PdxB_dimer_sf"/>
</dbReference>
<dbReference type="PANTHER" id="PTHR43761:SF1">
    <property type="entry name" value="D-ISOMER SPECIFIC 2-HYDROXYACID DEHYDROGENASE CATALYTIC DOMAIN-CONTAINING PROTEIN-RELATED"/>
    <property type="match status" value="1"/>
</dbReference>
<dbReference type="PANTHER" id="PTHR43761">
    <property type="entry name" value="D-ISOMER SPECIFIC 2-HYDROXYACID DEHYDROGENASE FAMILY PROTEIN (AFU_ORTHOLOGUE AFUA_1G13630)"/>
    <property type="match status" value="1"/>
</dbReference>
<dbReference type="Pfam" id="PF00389">
    <property type="entry name" value="2-Hacid_dh"/>
    <property type="match status" value="1"/>
</dbReference>
<dbReference type="Pfam" id="PF02826">
    <property type="entry name" value="2-Hacid_dh_C"/>
    <property type="match status" value="1"/>
</dbReference>
<dbReference type="Pfam" id="PF11890">
    <property type="entry name" value="DUF3410"/>
    <property type="match status" value="1"/>
</dbReference>
<dbReference type="SUPFAM" id="SSF52283">
    <property type="entry name" value="Formate/glycerate dehydrogenase catalytic domain-like"/>
    <property type="match status" value="1"/>
</dbReference>
<dbReference type="SUPFAM" id="SSF51735">
    <property type="entry name" value="NAD(P)-binding Rossmann-fold domains"/>
    <property type="match status" value="1"/>
</dbReference>
<dbReference type="PROSITE" id="PS00065">
    <property type="entry name" value="D_2_HYDROXYACID_DH_1"/>
    <property type="match status" value="1"/>
</dbReference>